<dbReference type="EMBL" id="AP006878">
    <property type="protein sequence ID" value="BAD85786.1"/>
    <property type="molecule type" value="Genomic_DNA"/>
</dbReference>
<dbReference type="RefSeq" id="WP_011250548.1">
    <property type="nucleotide sequence ID" value="NC_006624.1"/>
</dbReference>
<dbReference type="SMR" id="Q5JDS2"/>
<dbReference type="FunCoup" id="Q5JDS2">
    <property type="interactions" value="33"/>
</dbReference>
<dbReference type="STRING" id="69014.TK1597"/>
<dbReference type="EnsemblBacteria" id="BAD85786">
    <property type="protein sequence ID" value="BAD85786"/>
    <property type="gene ID" value="TK1597"/>
</dbReference>
<dbReference type="GeneID" id="78448125"/>
<dbReference type="KEGG" id="tko:TK1597"/>
<dbReference type="PATRIC" id="fig|69014.16.peg.1556"/>
<dbReference type="eggNOG" id="arCOG04138">
    <property type="taxonomic scope" value="Archaea"/>
</dbReference>
<dbReference type="HOGENOM" id="CLU_025558_1_0_2"/>
<dbReference type="InParanoid" id="Q5JDS2"/>
<dbReference type="OrthoDB" id="85892at2157"/>
<dbReference type="PhylomeDB" id="Q5JDS2"/>
<dbReference type="Proteomes" id="UP000000536">
    <property type="component" value="Chromosome"/>
</dbReference>
<dbReference type="GO" id="GO:0005886">
    <property type="term" value="C:plasma membrane"/>
    <property type="evidence" value="ECO:0007669"/>
    <property type="project" value="UniProtKB-SubCell"/>
</dbReference>
<dbReference type="GO" id="GO:0033179">
    <property type="term" value="C:proton-transporting V-type ATPase, V0 domain"/>
    <property type="evidence" value="ECO:0007669"/>
    <property type="project" value="InterPro"/>
</dbReference>
<dbReference type="GO" id="GO:0016471">
    <property type="term" value="C:vacuolar proton-transporting V-type ATPase complex"/>
    <property type="evidence" value="ECO:0000318"/>
    <property type="project" value="GO_Central"/>
</dbReference>
<dbReference type="GO" id="GO:0051117">
    <property type="term" value="F:ATPase binding"/>
    <property type="evidence" value="ECO:0000318"/>
    <property type="project" value="GO_Central"/>
</dbReference>
<dbReference type="GO" id="GO:0046961">
    <property type="term" value="F:proton-transporting ATPase activity, rotational mechanism"/>
    <property type="evidence" value="ECO:0007669"/>
    <property type="project" value="InterPro"/>
</dbReference>
<dbReference type="GO" id="GO:0007035">
    <property type="term" value="P:vacuolar acidification"/>
    <property type="evidence" value="ECO:0000318"/>
    <property type="project" value="GO_Central"/>
</dbReference>
<dbReference type="Gene3D" id="1.20.1460.20">
    <property type="match status" value="1"/>
</dbReference>
<dbReference type="Gene3D" id="3.30.70.2170">
    <property type="match status" value="1"/>
</dbReference>
<dbReference type="Gene3D" id="3.30.70.2750">
    <property type="match status" value="1"/>
</dbReference>
<dbReference type="InterPro" id="IPR002490">
    <property type="entry name" value="V-ATPase_116kDa_su"/>
</dbReference>
<dbReference type="NCBIfam" id="NF004428">
    <property type="entry name" value="PRK05771.2-1"/>
    <property type="match status" value="1"/>
</dbReference>
<dbReference type="PANTHER" id="PTHR11629:SF63">
    <property type="entry name" value="V-TYPE PROTON ATPASE SUBUNIT A"/>
    <property type="match status" value="1"/>
</dbReference>
<dbReference type="PANTHER" id="PTHR11629">
    <property type="entry name" value="VACUOLAR PROTON ATPASES"/>
    <property type="match status" value="1"/>
</dbReference>
<dbReference type="Pfam" id="PF01496">
    <property type="entry name" value="V_ATPase_I"/>
    <property type="match status" value="2"/>
</dbReference>
<keyword id="KW-1003">Cell membrane</keyword>
<keyword id="KW-0375">Hydrogen ion transport</keyword>
<keyword id="KW-0406">Ion transport</keyword>
<keyword id="KW-0472">Membrane</keyword>
<keyword id="KW-1185">Reference proteome</keyword>
<keyword id="KW-0812">Transmembrane</keyword>
<keyword id="KW-1133">Transmembrane helix</keyword>
<keyword id="KW-0813">Transport</keyword>
<proteinExistence type="inferred from homology"/>
<protein>
    <recommendedName>
        <fullName evidence="3">A-type ATP synthase subunit I</fullName>
    </recommendedName>
</protein>
<feature type="chain" id="PRO_0000119234" description="A-type ATP synthase subunit I">
    <location>
        <begin position="1"/>
        <end position="663"/>
    </location>
</feature>
<feature type="transmembrane region" description="Helical" evidence="2">
    <location>
        <begin position="376"/>
        <end position="396"/>
    </location>
</feature>
<feature type="transmembrane region" description="Helical" evidence="2">
    <location>
        <begin position="412"/>
        <end position="432"/>
    </location>
</feature>
<feature type="transmembrane region" description="Helical" evidence="2">
    <location>
        <begin position="468"/>
        <end position="488"/>
    </location>
</feature>
<feature type="transmembrane region" description="Helical" evidence="2">
    <location>
        <begin position="497"/>
        <end position="517"/>
    </location>
</feature>
<feature type="transmembrane region" description="Helical" evidence="2">
    <location>
        <begin position="534"/>
        <end position="554"/>
    </location>
</feature>
<feature type="transmembrane region" description="Helical" evidence="2">
    <location>
        <begin position="568"/>
        <end position="588"/>
    </location>
</feature>
<feature type="transmembrane region" description="Helical" evidence="2">
    <location>
        <begin position="589"/>
        <end position="609"/>
    </location>
</feature>
<comment type="function">
    <text evidence="1">Component of the A-type ATP synthase that produces ATP from ADP in the presence of a proton gradient across the membrane.</text>
</comment>
<comment type="subunit">
    <text evidence="1">Has multiple subunits with at least A(3), B(3), C, D, E, F, H, I and proteolipid K(x).</text>
</comment>
<comment type="subcellular location">
    <subcellularLocation>
        <location evidence="3">Cell membrane</location>
        <topology evidence="3">Multi-pass membrane protein</topology>
    </subcellularLocation>
</comment>
<comment type="similarity">
    <text evidence="3">Belongs to the V-ATPase 116 kDa subunit family.</text>
</comment>
<evidence type="ECO:0000250" key="1">
    <source>
        <dbReference type="UniProtKB" id="Q57675"/>
    </source>
</evidence>
<evidence type="ECO:0000255" key="2"/>
<evidence type="ECO:0000305" key="3"/>
<reference key="1">
    <citation type="journal article" date="2005" name="Genome Res.">
        <title>Complete genome sequence of the hyperthermophilic archaeon Thermococcus kodakaraensis KOD1 and comparison with Pyrococcus genomes.</title>
        <authorList>
            <person name="Fukui T."/>
            <person name="Atomi H."/>
            <person name="Kanai T."/>
            <person name="Matsumi R."/>
            <person name="Fujiwara S."/>
            <person name="Imanaka T."/>
        </authorList>
    </citation>
    <scope>NUCLEOTIDE SEQUENCE [LARGE SCALE GENOMIC DNA]</scope>
    <source>
        <strain>ATCC BAA-918 / JCM 12380 / KOD1</strain>
    </source>
</reference>
<organism>
    <name type="scientific">Thermococcus kodakarensis (strain ATCC BAA-918 / JCM 12380 / KOD1)</name>
    <name type="common">Pyrococcus kodakaraensis (strain KOD1)</name>
    <dbReference type="NCBI Taxonomy" id="69014"/>
    <lineage>
        <taxon>Archaea</taxon>
        <taxon>Methanobacteriati</taxon>
        <taxon>Methanobacteriota</taxon>
        <taxon>Thermococci</taxon>
        <taxon>Thermococcales</taxon>
        <taxon>Thermococcaceae</taxon>
        <taxon>Thermococcus</taxon>
    </lineage>
</organism>
<sequence>MFRPEEMVKLEVITLNRYKDTLLTYLHEAGAVEVREVKVELAQKDTPNEYHRKAASYSISMSRLVEFLGTYRKAAGGGIKEFFFPKEKPKRTYRYERLEKLIKDVEEFLGKVEPEIKAIEGRMNSLSTEIERIKEQIGILDILTPLNIDVSYLRHCGVVEVTVGLVDRTRVKELADALKKETENHVAIITKEASDKALVVIVNLARDHDKVNTLLAKFSVEKLEIPEGEGTPKELMKEYSKKLAEKEKELEEAKKEASKLAEKYYDDVLFYKELVDNERDKSTVLPMLARTNMTFALTGWVPRPDVQKILEGIKRITEGKAYINVREPRKEELEEMPVKLKNPGWARPFEMLTEMYGVPRHDEIDPTPIIAFTYSFFFGFMLTDFLYGLIVGIVAALLVKGHKKFNDGTYKFAYILLWSAFFTMLLGALFGSYFGNAADIMLQYITGDQNAHAWRLLDPLREPMPMLLAALAIGLAHLFLGYTLGFVIKWKNGDRKGAVFEQLPWMIIIIGVALLASQREGLDAAAKAILGTGIALFAVGELVINGGLAALMIISDFFGFVGNWLSYARLMALALATGGIAMVINVLVGMVWAIKFLYIGPIIGLIIFFGGQLFSTAINALGAFVHALRLHYVEFFGTFYSGEGKRFEPFKSKREVSKLELEV</sequence>
<name>AATI_THEKO</name>
<accession>Q5JDS2</accession>
<gene>
    <name evidence="3" type="primary">atpI</name>
    <name type="ordered locus">TK1597</name>
</gene>